<evidence type="ECO:0000250" key="1">
    <source>
        <dbReference type="UniProtKB" id="Q3UJB9"/>
    </source>
</evidence>
<evidence type="ECO:0000255" key="2"/>
<evidence type="ECO:0000256" key="3">
    <source>
        <dbReference type="SAM" id="MobiDB-lite"/>
    </source>
</evidence>
<evidence type="ECO:0000269" key="4">
    <source>
    </source>
</evidence>
<evidence type="ECO:0000269" key="5">
    <source>
    </source>
</evidence>
<evidence type="ECO:0000269" key="6">
    <source>
    </source>
</evidence>
<evidence type="ECO:0000269" key="7">
    <source>
    </source>
</evidence>
<evidence type="ECO:0000269" key="8">
    <source>
    </source>
</evidence>
<evidence type="ECO:0000269" key="9">
    <source>
    </source>
</evidence>
<evidence type="ECO:0000269" key="10">
    <source>
    </source>
</evidence>
<evidence type="ECO:0000303" key="11">
    <source>
    </source>
</evidence>
<evidence type="ECO:0000305" key="12"/>
<evidence type="ECO:0007744" key="13">
    <source>
    </source>
</evidence>
<evidence type="ECO:0007744" key="14">
    <source>
    </source>
</evidence>
<evidence type="ECO:0007744" key="15">
    <source>
    </source>
</evidence>
<evidence type="ECO:0007744" key="16">
    <source>
    </source>
</evidence>
<evidence type="ECO:0007744" key="17">
    <source>
    </source>
</evidence>
<evidence type="ECO:0007744" key="18">
    <source>
    </source>
</evidence>
<evidence type="ECO:0007744" key="19">
    <source>
    </source>
</evidence>
<evidence type="ECO:0007744" key="20">
    <source>
    </source>
</evidence>
<evidence type="ECO:0007744" key="21">
    <source>
    </source>
</evidence>
<evidence type="ECO:0007744" key="22">
    <source>
    </source>
</evidence>
<evidence type="ECO:0007744" key="23">
    <source>
    </source>
</evidence>
<evidence type="ECO:0007744" key="24">
    <source>
    </source>
</evidence>
<organism>
    <name type="scientific">Homo sapiens</name>
    <name type="common">Human</name>
    <dbReference type="NCBI Taxonomy" id="9606"/>
    <lineage>
        <taxon>Eukaryota</taxon>
        <taxon>Metazoa</taxon>
        <taxon>Chordata</taxon>
        <taxon>Craniata</taxon>
        <taxon>Vertebrata</taxon>
        <taxon>Euteleostomi</taxon>
        <taxon>Mammalia</taxon>
        <taxon>Eutheria</taxon>
        <taxon>Euarchontoglires</taxon>
        <taxon>Primates</taxon>
        <taxon>Haplorrhini</taxon>
        <taxon>Catarrhini</taxon>
        <taxon>Hominidae</taxon>
        <taxon>Homo</taxon>
    </lineage>
</organism>
<accession>Q6P2E9</accession>
<accession>A6NGM1</accession>
<accession>A8K4T4</accession>
<accession>Q13025</accession>
<accession>Q13826</accession>
<accession>Q6ZR12</accession>
<accession>Q7Z6H7</accession>
<dbReference type="EMBL" id="L26339">
    <property type="protein sequence ID" value="AAA21833.1"/>
    <property type="status" value="ALT_FRAME"/>
    <property type="molecule type" value="mRNA"/>
</dbReference>
<dbReference type="EMBL" id="AK128582">
    <property type="status" value="NOT_ANNOTATED_CDS"/>
    <property type="molecule type" value="mRNA"/>
</dbReference>
<dbReference type="EMBL" id="AK291049">
    <property type="protein sequence ID" value="BAF83738.1"/>
    <property type="molecule type" value="mRNA"/>
</dbReference>
<dbReference type="EMBL" id="AC040162">
    <property type="status" value="NOT_ANNOTATED_CDS"/>
    <property type="molecule type" value="Genomic_DNA"/>
</dbReference>
<dbReference type="EMBL" id="CH471092">
    <property type="protein sequence ID" value="EAW83183.1"/>
    <property type="molecule type" value="Genomic_DNA"/>
</dbReference>
<dbReference type="EMBL" id="BC043616">
    <property type="protein sequence ID" value="AAH43616.1"/>
    <property type="molecule type" value="mRNA"/>
</dbReference>
<dbReference type="EMBL" id="BC053598">
    <property type="protein sequence ID" value="AAH53598.1"/>
    <property type="status" value="ALT_INIT"/>
    <property type="molecule type" value="mRNA"/>
</dbReference>
<dbReference type="EMBL" id="BC064567">
    <property type="protein sequence ID" value="AAH64567.1"/>
    <property type="molecule type" value="mRNA"/>
</dbReference>
<dbReference type="EMBL" id="U17474">
    <property type="protein sequence ID" value="AAB51444.1"/>
    <property type="status" value="ALT_INIT"/>
    <property type="molecule type" value="mRNA"/>
</dbReference>
<dbReference type="CCDS" id="CCDS10849.1">
    <molecule id="Q6P2E9-1"/>
</dbReference>
<dbReference type="PIR" id="I52882">
    <property type="entry name" value="I52882"/>
</dbReference>
<dbReference type="RefSeq" id="NP_055144.3">
    <molecule id="Q6P2E9-1"/>
    <property type="nucleotide sequence ID" value="NM_014329.4"/>
</dbReference>
<dbReference type="SMR" id="Q6P2E9"/>
<dbReference type="BioGRID" id="117171">
    <property type="interactions" value="228"/>
</dbReference>
<dbReference type="ComplexPortal" id="CPX-2870">
    <property type="entry name" value="RNA decapping and exonuclease complex, DCP1A variant"/>
</dbReference>
<dbReference type="ComplexPortal" id="CPX-7341">
    <property type="entry name" value="RNA decapping and exonuclease complex, DCP1B variant"/>
</dbReference>
<dbReference type="CORUM" id="Q6P2E9"/>
<dbReference type="DIP" id="DIP-31192N"/>
<dbReference type="FunCoup" id="Q6P2E9">
    <property type="interactions" value="3776"/>
</dbReference>
<dbReference type="IntAct" id="Q6P2E9">
    <property type="interactions" value="117"/>
</dbReference>
<dbReference type="MINT" id="Q6P2E9"/>
<dbReference type="STRING" id="9606.ENSP00000351811"/>
<dbReference type="GlyGen" id="Q6P2E9">
    <property type="glycosylation" value="2 sites, 1 O-linked glycan (1 site)"/>
</dbReference>
<dbReference type="iPTMnet" id="Q6P2E9"/>
<dbReference type="MetOSite" id="Q6P2E9"/>
<dbReference type="PhosphoSitePlus" id="Q6P2E9"/>
<dbReference type="SwissPalm" id="Q6P2E9"/>
<dbReference type="BioMuta" id="EDC4"/>
<dbReference type="DMDM" id="74758241"/>
<dbReference type="jPOST" id="Q6P2E9"/>
<dbReference type="MassIVE" id="Q6P2E9"/>
<dbReference type="PaxDb" id="9606-ENSP00000351811"/>
<dbReference type="PeptideAtlas" id="Q6P2E9"/>
<dbReference type="ProteomicsDB" id="66897">
    <molecule id="Q6P2E9-1"/>
</dbReference>
<dbReference type="ProteomicsDB" id="66898">
    <molecule id="Q6P2E9-2"/>
</dbReference>
<dbReference type="Pumba" id="Q6P2E9"/>
<dbReference type="Antibodypedia" id="29657">
    <property type="antibodies" value="157 antibodies from 28 providers"/>
</dbReference>
<dbReference type="DNASU" id="23644"/>
<dbReference type="Ensembl" id="ENST00000358933.10">
    <molecule id="Q6P2E9-1"/>
    <property type="protein sequence ID" value="ENSP00000351811.5"/>
    <property type="gene ID" value="ENSG00000038358.15"/>
</dbReference>
<dbReference type="GeneID" id="23644"/>
<dbReference type="KEGG" id="hsa:23644"/>
<dbReference type="MANE-Select" id="ENST00000358933.10">
    <property type="protein sequence ID" value="ENSP00000351811.5"/>
    <property type="RefSeq nucleotide sequence ID" value="NM_014329.5"/>
    <property type="RefSeq protein sequence ID" value="NP_055144.3"/>
</dbReference>
<dbReference type="UCSC" id="uc002eur.4">
    <molecule id="Q6P2E9-1"/>
    <property type="organism name" value="human"/>
</dbReference>
<dbReference type="AGR" id="HGNC:17157"/>
<dbReference type="CTD" id="23644"/>
<dbReference type="DisGeNET" id="23644"/>
<dbReference type="GeneCards" id="EDC4"/>
<dbReference type="HGNC" id="HGNC:17157">
    <property type="gene designation" value="EDC4"/>
</dbReference>
<dbReference type="HPA" id="ENSG00000038358">
    <property type="expression patterns" value="Low tissue specificity"/>
</dbReference>
<dbReference type="MIM" id="606030">
    <property type="type" value="gene"/>
</dbReference>
<dbReference type="neXtProt" id="NX_Q6P2E9"/>
<dbReference type="OpenTargets" id="ENSG00000038358"/>
<dbReference type="PharmGKB" id="PA145148958"/>
<dbReference type="VEuPathDB" id="HostDB:ENSG00000038358"/>
<dbReference type="eggNOG" id="KOG1916">
    <property type="taxonomic scope" value="Eukaryota"/>
</dbReference>
<dbReference type="GeneTree" id="ENSGT00510000047791"/>
<dbReference type="HOGENOM" id="CLU_005166_0_0_1"/>
<dbReference type="InParanoid" id="Q6P2E9"/>
<dbReference type="OMA" id="TREHMGT"/>
<dbReference type="OrthoDB" id="21128at2759"/>
<dbReference type="PAN-GO" id="Q6P2E9">
    <property type="GO annotations" value="2 GO annotations based on evolutionary models"/>
</dbReference>
<dbReference type="PhylomeDB" id="Q6P2E9"/>
<dbReference type="TreeFam" id="TF350715"/>
<dbReference type="PathwayCommons" id="Q6P2E9"/>
<dbReference type="Reactome" id="R-HSA-430039">
    <property type="pathway name" value="mRNA decay by 5' to 3' exoribonuclease"/>
</dbReference>
<dbReference type="SignaLink" id="Q6P2E9"/>
<dbReference type="BioGRID-ORCS" id="23644">
    <property type="hits" value="269 hits in 1161 CRISPR screens"/>
</dbReference>
<dbReference type="CD-CODE" id="232F8A39">
    <property type="entry name" value="P-body"/>
</dbReference>
<dbReference type="CD-CODE" id="91857CE7">
    <property type="entry name" value="Nucleolus"/>
</dbReference>
<dbReference type="CD-CODE" id="DEE660B4">
    <property type="entry name" value="Stress granule"/>
</dbReference>
<dbReference type="ChiTaRS" id="EDC4">
    <property type="organism name" value="human"/>
</dbReference>
<dbReference type="GenomeRNAi" id="23644"/>
<dbReference type="Pharos" id="Q6P2E9">
    <property type="development level" value="Tbio"/>
</dbReference>
<dbReference type="PRO" id="PR:Q6P2E9"/>
<dbReference type="Proteomes" id="UP000005640">
    <property type="component" value="Chromosome 16"/>
</dbReference>
<dbReference type="RNAct" id="Q6P2E9">
    <property type="molecule type" value="protein"/>
</dbReference>
<dbReference type="Bgee" id="ENSG00000038358">
    <property type="expression patterns" value="Expressed in right hemisphere of cerebellum and 96 other cell types or tissues"/>
</dbReference>
<dbReference type="ExpressionAtlas" id="Q6P2E9">
    <property type="expression patterns" value="baseline and differential"/>
</dbReference>
<dbReference type="GO" id="GO:0005737">
    <property type="term" value="C:cytoplasm"/>
    <property type="evidence" value="ECO:0000304"/>
    <property type="project" value="UniProtKB"/>
</dbReference>
<dbReference type="GO" id="GO:0036464">
    <property type="term" value="C:cytoplasmic ribonucleoprotein granule"/>
    <property type="evidence" value="ECO:0000314"/>
    <property type="project" value="HPA"/>
</dbReference>
<dbReference type="GO" id="GO:0005829">
    <property type="term" value="C:cytosol"/>
    <property type="evidence" value="ECO:0000304"/>
    <property type="project" value="Reactome"/>
</dbReference>
<dbReference type="GO" id="GO:0016020">
    <property type="term" value="C:membrane"/>
    <property type="evidence" value="ECO:0007005"/>
    <property type="project" value="UniProtKB"/>
</dbReference>
<dbReference type="GO" id="GO:0005654">
    <property type="term" value="C:nucleoplasm"/>
    <property type="evidence" value="ECO:0000314"/>
    <property type="project" value="HPA"/>
</dbReference>
<dbReference type="GO" id="GO:0005634">
    <property type="term" value="C:nucleus"/>
    <property type="evidence" value="ECO:0000314"/>
    <property type="project" value="UniProtKB"/>
</dbReference>
<dbReference type="GO" id="GO:0000932">
    <property type="term" value="C:P-body"/>
    <property type="evidence" value="ECO:0000314"/>
    <property type="project" value="MGI"/>
</dbReference>
<dbReference type="GO" id="GO:0031087">
    <property type="term" value="P:deadenylation-independent decapping of nuclear-transcribed mRNA"/>
    <property type="evidence" value="ECO:0000318"/>
    <property type="project" value="GO_Central"/>
</dbReference>
<dbReference type="FunFam" id="1.10.220.100:FF:000001">
    <property type="entry name" value="Enhancer of mRNA-decapping protein 4"/>
    <property type="match status" value="1"/>
</dbReference>
<dbReference type="FunFam" id="2.130.10.10:FF:000138">
    <property type="entry name" value="Enhancer of mRNA-decapping protein 4"/>
    <property type="match status" value="1"/>
</dbReference>
<dbReference type="Gene3D" id="6.10.140.270">
    <property type="match status" value="1"/>
</dbReference>
<dbReference type="Gene3D" id="1.10.220.100">
    <property type="entry name" value="conserved c-terminal region of ge- 1"/>
    <property type="match status" value="1"/>
</dbReference>
<dbReference type="Gene3D" id="2.130.10.10">
    <property type="entry name" value="YVTN repeat-like/Quinoprotein amine dehydrogenase"/>
    <property type="match status" value="1"/>
</dbReference>
<dbReference type="InterPro" id="IPR045152">
    <property type="entry name" value="EDC4-like"/>
</dbReference>
<dbReference type="InterPro" id="IPR049404">
    <property type="entry name" value="EDC4_C"/>
</dbReference>
<dbReference type="InterPro" id="IPR044938">
    <property type="entry name" value="EDC4_C_sf"/>
</dbReference>
<dbReference type="InterPro" id="IPR032401">
    <property type="entry name" value="EDC4_WD40"/>
</dbReference>
<dbReference type="InterPro" id="IPR015943">
    <property type="entry name" value="WD40/YVTN_repeat-like_dom_sf"/>
</dbReference>
<dbReference type="InterPro" id="IPR036322">
    <property type="entry name" value="WD40_repeat_dom_sf"/>
</dbReference>
<dbReference type="InterPro" id="IPR001680">
    <property type="entry name" value="WD40_rpt"/>
</dbReference>
<dbReference type="PANTHER" id="PTHR15598">
    <property type="entry name" value="ENHANCER OF MRNA-DECAPPING PROTEIN 4"/>
    <property type="match status" value="1"/>
</dbReference>
<dbReference type="PANTHER" id="PTHR15598:SF5">
    <property type="entry name" value="ENHANCER OF MRNA-DECAPPING PROTEIN 4"/>
    <property type="match status" value="1"/>
</dbReference>
<dbReference type="Pfam" id="PF21289">
    <property type="entry name" value="EDC4_C"/>
    <property type="match status" value="1"/>
</dbReference>
<dbReference type="Pfam" id="PF16529">
    <property type="entry name" value="Ge1_WD40"/>
    <property type="match status" value="1"/>
</dbReference>
<dbReference type="SMART" id="SM00320">
    <property type="entry name" value="WD40"/>
    <property type="match status" value="3"/>
</dbReference>
<dbReference type="SUPFAM" id="SSF50978">
    <property type="entry name" value="WD40 repeat-like"/>
    <property type="match status" value="1"/>
</dbReference>
<dbReference type="PROSITE" id="PS50082">
    <property type="entry name" value="WD_REPEATS_2"/>
    <property type="match status" value="1"/>
</dbReference>
<dbReference type="PROSITE" id="PS50294">
    <property type="entry name" value="WD_REPEATS_REGION"/>
    <property type="match status" value="1"/>
</dbReference>
<comment type="function">
    <text evidence="4">In the process of mRNA degradation, seems to play a role in mRNA decapping. Component of a complex containing DCP2 and DCP1A which functions in decapping of ARE-containing mRNAs. Promotes complex formation between DCP1A and DCP2. Enhances the catalytic activity of DCP2 (in vitro).</text>
</comment>
<comment type="subunit">
    <text evidence="1 4 5 6 8">Part of a decapping complex consisting of DCP1A, DCP2, EDC3, EDC4 and probably DDX6. Part of a complex consisting of DCP1A, EDC3, EDC4 and DDX6. Part of a complex consisting of DCP1B, EDC3, EDC4 and DDX6. Interacts with DCP2 (PubMed:16364915). Interacts with RC3H1 (By similarity). Interacts with NBDY (PubMed:27918561). Interacts with TEX19 (By similarity). Interacts with LSM14A (PubMed:29510985). Interacts with DDX6 (PubMed:31422817).</text>
</comment>
<comment type="subunit">
    <text evidence="7">(Microbial infection) Interacts with rotavirus A non-structural protein 2; this interaction probably plays a role in the sequestration of EDC4 in viral factories (PubMed:30258011). Interacts with rotavirus A non-structural protein 5; this interaction probably plays a role in its sequestration in viral factories (PubMed:30258011).</text>
</comment>
<comment type="interaction">
    <interactant intactId="EBI-1006038">
        <id>Q6P2E9</id>
    </interactant>
    <interactant intactId="EBI-2267883">
        <id>Q9H9G7</id>
        <label>AGO3</label>
    </interactant>
    <organismsDiffer>false</organismsDiffer>
    <experiments>2</experiments>
</comment>
<comment type="interaction">
    <interactant intactId="EBI-1006038">
        <id>Q6P2E9</id>
    </interactant>
    <interactant intactId="EBI-1773621">
        <id>Q86XL3</id>
        <label>ANKLE2</label>
    </interactant>
    <organismsDiffer>false</organismsDiffer>
    <experiments>2</experiments>
</comment>
<comment type="interaction">
    <interactant intactId="EBI-1006038">
        <id>Q6P2E9</id>
    </interactant>
    <interactant intactId="EBI-745967">
        <id>Q13057</id>
        <label>COASY</label>
    </interactant>
    <organismsDiffer>false</organismsDiffer>
    <experiments>3</experiments>
</comment>
<comment type="interaction">
    <interactant intactId="EBI-1006038">
        <id>Q6P2E9</id>
    </interactant>
    <interactant intactId="EBI-374238">
        <id>Q9NPI6</id>
        <label>DCP1A</label>
    </interactant>
    <organismsDiffer>false</organismsDiffer>
    <experiments>12</experiments>
</comment>
<comment type="interaction">
    <interactant intactId="EBI-1006038">
        <id>Q6P2E9</id>
    </interactant>
    <interactant intactId="EBI-521577">
        <id>Q8IU60</id>
        <label>DCP2</label>
    </interactant>
    <organismsDiffer>false</organismsDiffer>
    <experiments>11</experiments>
</comment>
<comment type="interaction">
    <interactant intactId="EBI-1006038">
        <id>Q6P2E9</id>
    </interactant>
    <interactant intactId="EBI-521590">
        <id>Q8IU60-2</id>
        <label>DCP2</label>
    </interactant>
    <organismsDiffer>false</organismsDiffer>
    <experiments>2</experiments>
</comment>
<comment type="interaction">
    <interactant intactId="EBI-1006038">
        <id>Q6P2E9</id>
    </interactant>
    <interactant intactId="EBI-640775">
        <id>P19525</id>
        <label>EIF2AK2</label>
    </interactant>
    <organismsDiffer>false</organismsDiffer>
    <experiments>2</experiments>
</comment>
<comment type="interaction">
    <interactant intactId="EBI-1006038">
        <id>Q6P2E9</id>
    </interactant>
    <interactant intactId="EBI-27058088">
        <id>A0A0U1RRE5</id>
        <label>NBDY</label>
    </interactant>
    <organismsDiffer>false</organismsDiffer>
    <experiments>11</experiments>
</comment>
<comment type="interaction">
    <interactant intactId="EBI-1006038">
        <id>Q6P2E9</id>
    </interactant>
    <interactant intactId="EBI-372406">
        <id>Q8IZH2</id>
        <label>XRN1</label>
    </interactant>
    <organismsDiffer>false</organismsDiffer>
    <experiments>5</experiments>
</comment>
<comment type="subcellular location">
    <subcellularLocation>
        <location evidence="4 10">Cytoplasm</location>
        <location evidence="4 10">P-body</location>
    </subcellularLocation>
    <subcellularLocation>
        <location evidence="9">Nucleus</location>
    </subcellularLocation>
</comment>
<comment type="alternative products">
    <event type="alternative splicing"/>
    <isoform>
        <id>Q6P2E9-1</id>
        <name>1</name>
        <sequence type="displayed"/>
    </isoform>
    <isoform>
        <id>Q6P2E9-2</id>
        <name>2</name>
        <sequence type="described" ref="VSP_023412"/>
    </isoform>
</comment>
<comment type="similarity">
    <text evidence="12">Belongs to the WD repeat EDC4 family.</text>
</comment>
<comment type="sequence caution" evidence="12">
    <conflict type="frameshift">
        <sequence resource="EMBL-CDS" id="AAA21833"/>
    </conflict>
</comment>
<comment type="sequence caution" evidence="12">
    <conflict type="erroneous initiation">
        <sequence resource="EMBL-CDS" id="AAB51444"/>
    </conflict>
</comment>
<comment type="sequence caution" evidence="12">
    <conflict type="erroneous initiation">
        <sequence resource="EMBL-CDS" id="AAH53598"/>
    </conflict>
    <text>Extended N-terminus.</text>
</comment>
<sequence length="1401" mass="151661">MASCASIDIEDATQHLRDILKLDRPAGGPSAESPRPSSAYNGDLNGLLVPDPLCSGDSTSANKTGLRTMPPINLQEKQVICLSGDDSSTCIGILAKEVEIVASSDSSISSKARGSNKVKIQPVAKYDWEQKYYYGNLIAVSNSFLAYAIRAANNGSAMVRVISVSTSERTLLKGFTGSVADLAFAHLNSPQLACLDEAGNLFVWRLALVNGKIQEEILVHIRQPEGTPLNHFRRIIWCPFIPEESEDCCEESSPTVALLHEDRAEVWDLDMLRSSHSTWPVDVSQIKQGFIVVKGHSTCLSEGALSPDGTVLATASHDGYVKFWQIYIEGQDEPRCLHEWKPHDGRPLSCLLFCDNHKKQDPDVPFWRFLITGADQNRELKMWCTVSWTCLQTIRFSPDIFSSVSVPPSLKVCLDLSAEYLILSDVQRKVLYVMELLQNQEEGHACFSSISEFLLTHPVLSFGIQVVSRCRLRHTEVLPAEEENDSLGADGTHGAGAMESAAGVLIKLFCVHTKALQDVQIRFQPQLNPDVVAPLPTHTAHEDFTFGESRPELGSEGLGSAAHGSQPDLRRIVELPAPADFLSLSSETKPKLMTPDAFMTPSASLQQITASPSSSSSGSSSSSSSSSSSLTAVSAMSSTSAVDPSLTRPPEELTLSPKLQLDGSLTMSSSGSLQASPRGLLPGLLPAPADKLTPKGPGQVPTATSALSLELQEVEPLGLPQASPSRTRSPDVISSASTALSQDIPEIASEALSRGFGSSAPEGLEPDSMASAASALHLLSPRPRPGPELGPQLGLDGGPGDGDRHNTPSLLEAALTQEASTPDSQVWPTAPDITRETCSTLAESPRNGLQEKHKSLAFHRPPYHLLQQRDSQDASAEQSDHDDEVASLASASGGFGTKVPAPRLPAKDWKTKGSPRTSPKLKRKSKKDDGDAAMGSRLTEHQVAEPPEDWPALIWQQQRELAELRHSQEELLQRLCTQLEGLQSTVTGHVERALETRHEQEQRRLERALAEGQQRGGQLQEQLTQQLSQALSSAVAGRLERSIRDEIKKTVPPCVSRSLEPMAGQLSNSVATKLTAVEGSMKENISKLLKSKNLTDAIARAAADTLQGPMQAAYREAFQSVVLPAFEKSCQAMFQQINDSFRLGTQEYLQQLESHMKSRKAREQEAREPVLAQLRGLVSTLQSATEQMAATVAGSVRAEVQHQLHVAVGSLQESILAQVQRIVKGEVSVALKEQQAAVTSSIMQAMRSAAGTPVPSAHLDCQAQQAHILQLLQQGHLNQAFQQALTAADLNLVLYVCETVDPAQVFGQPPCPLSQPVLLSLIQQLASDLGTRTDLKLSYLEEAVMHLDHSDPITRDHMGSVMAQVRQKLFQFLQAEPHNSLGKAARRLSLMLHGLVTPSLP</sequence>
<feature type="initiator methionine" description="Removed" evidence="20">
    <location>
        <position position="1"/>
    </location>
</feature>
<feature type="chain" id="PRO_0000278962" description="Enhancer of mRNA-decapping protein 4">
    <location>
        <begin position="2"/>
        <end position="1401"/>
    </location>
</feature>
<feature type="repeat" description="WD 1">
    <location>
        <begin position="121"/>
        <end position="164"/>
    </location>
</feature>
<feature type="repeat" description="WD 2">
    <location>
        <begin position="167"/>
        <end position="206"/>
    </location>
</feature>
<feature type="repeat" description="WD 3">
    <location>
        <begin position="217"/>
        <end position="269"/>
    </location>
</feature>
<feature type="repeat" description="WD 4">
    <location>
        <begin position="287"/>
        <end position="326"/>
    </location>
</feature>
<feature type="repeat" description="WD 5">
    <location>
        <begin position="335"/>
        <end position="385"/>
    </location>
</feature>
<feature type="repeat" description="WD 6">
    <location>
        <begin position="389"/>
        <end position="426"/>
    </location>
</feature>
<feature type="repeat" description="WD 7">
    <location>
        <begin position="432"/>
        <end position="475"/>
    </location>
</feature>
<feature type="region of interest" description="Disordered" evidence="3">
    <location>
        <begin position="23"/>
        <end position="42"/>
    </location>
</feature>
<feature type="region of interest" description="Disordered" evidence="3">
    <location>
        <begin position="545"/>
        <end position="565"/>
    </location>
</feature>
<feature type="region of interest" description="Disordered" evidence="3">
    <location>
        <begin position="603"/>
        <end position="628"/>
    </location>
</feature>
<feature type="region of interest" description="Disordered" evidence="3">
    <location>
        <begin position="662"/>
        <end position="702"/>
    </location>
</feature>
<feature type="region of interest" description="Disordered" evidence="3">
    <location>
        <begin position="717"/>
        <end position="741"/>
    </location>
</feature>
<feature type="region of interest" description="Disordered" evidence="3">
    <location>
        <begin position="778"/>
        <end position="808"/>
    </location>
</feature>
<feature type="region of interest" description="Disordered" evidence="3">
    <location>
        <begin position="868"/>
        <end position="946"/>
    </location>
</feature>
<feature type="region of interest" description="Sufficient for nuclear localization">
    <location>
        <begin position="913"/>
        <end position="934"/>
    </location>
</feature>
<feature type="coiled-coil region" evidence="2">
    <location>
        <begin position="954"/>
        <end position="1025"/>
    </location>
</feature>
<feature type="compositionally biased region" description="Low complexity" evidence="3">
    <location>
        <begin position="609"/>
        <end position="628"/>
    </location>
</feature>
<feature type="compositionally biased region" description="Polar residues" evidence="3">
    <location>
        <begin position="663"/>
        <end position="675"/>
    </location>
</feature>
<feature type="compositionally biased region" description="Low complexity" evidence="3">
    <location>
        <begin position="677"/>
        <end position="689"/>
    </location>
</feature>
<feature type="compositionally biased region" description="Polar residues" evidence="3">
    <location>
        <begin position="722"/>
        <end position="741"/>
    </location>
</feature>
<feature type="modified residue" description="N-acetylalanine" evidence="20">
    <location>
        <position position="2"/>
    </location>
</feature>
<feature type="modified residue" description="Phosphoserine" evidence="23">
    <location>
        <position position="3"/>
    </location>
</feature>
<feature type="modified residue" description="Phosphoserine" evidence="23">
    <location>
        <position position="6"/>
    </location>
</feature>
<feature type="modified residue" description="N6-acetyllysine" evidence="21">
    <location>
        <position position="125"/>
    </location>
</feature>
<feature type="modified residue" description="Phosphoserine" evidence="24">
    <location>
        <position position="560"/>
    </location>
</feature>
<feature type="modified residue" description="Phosphoserine" evidence="24">
    <location>
        <position position="565"/>
    </location>
</feature>
<feature type="modified residue" description="Phosphoserine" evidence="23">
    <location>
        <position position="583"/>
    </location>
</feature>
<feature type="modified residue" description="Phosphoserine" evidence="23">
    <location>
        <position position="585"/>
    </location>
</feature>
<feature type="modified residue" description="Phosphoserine" evidence="1">
    <location>
        <position position="676"/>
    </location>
</feature>
<feature type="modified residue" description="Phosphothreonine" evidence="15 22 23">
    <location>
        <position position="693"/>
    </location>
</feature>
<feature type="modified residue" description="Phosphoserine" evidence="24">
    <location>
        <position position="708"/>
    </location>
</feature>
<feature type="modified residue" description="Phosphoserine" evidence="17">
    <location>
        <position position="723"/>
    </location>
</feature>
<feature type="modified residue" description="Phosphoserine" evidence="17 24">
    <location>
        <position position="725"/>
    </location>
</feature>
<feature type="modified residue" description="Phosphothreonine" evidence="24">
    <location>
        <position position="727"/>
    </location>
</feature>
<feature type="modified residue" description="Phosphoserine" evidence="16 18 19 22 23 24">
    <location>
        <position position="729"/>
    </location>
</feature>
<feature type="modified residue" description="Phosphoserine" evidence="14 22">
    <location>
        <position position="741"/>
    </location>
</feature>
<feature type="modified residue" description="Phosphothreonine" evidence="17">
    <location>
        <position position="821"/>
    </location>
</feature>
<feature type="modified residue" description="Phosphoserine" evidence="13 17 23">
    <location>
        <position position="844"/>
    </location>
</feature>
<feature type="modified residue" description="Phosphoserine" evidence="17 18 24">
    <location>
        <position position="871"/>
    </location>
</feature>
<feature type="modified residue" description="Phosphoserine" evidence="22">
    <location>
        <position position="875"/>
    </location>
</feature>
<feature type="modified residue" description="Phosphoserine" evidence="17 19 22 24">
    <location>
        <position position="879"/>
    </location>
</feature>
<feature type="modified residue" description="Phosphoserine" evidence="1">
    <location>
        <position position="887"/>
    </location>
</feature>
<feature type="modified residue" description="Phosphoserine" evidence="1">
    <location>
        <position position="890"/>
    </location>
</feature>
<feature type="modified residue" description="Phosphoserine" evidence="22">
    <location>
        <position position="892"/>
    </location>
</feature>
<feature type="modified residue" description="Phosphoserine" evidence="23">
    <location>
        <position position="967"/>
    </location>
</feature>
<feature type="modified residue" description="Phosphoserine" evidence="23">
    <location>
        <position position="1380"/>
    </location>
</feature>
<feature type="splice variant" id="VSP_023412" description="In isoform 2." evidence="11">
    <location>
        <begin position="1"/>
        <end position="381"/>
    </location>
</feature>
<feature type="sequence conflict" description="In Ref. 1; AAA21833." evidence="12" ref="1">
    <original>ML</original>
    <variation>IV</variation>
    <location>
        <begin position="271"/>
        <end position="272"/>
    </location>
</feature>
<feature type="sequence conflict" description="In Ref. 6; AAB51444." evidence="12" ref="6">
    <original>S</original>
    <variation>N</variation>
    <location>
        <position position="621"/>
    </location>
</feature>
<feature type="sequence conflict" description="In Ref. 1; AAA21833." evidence="12" ref="1">
    <original>QL</original>
    <variation>HW</variation>
    <location>
        <begin position="1018"/>
        <end position="1019"/>
    </location>
</feature>
<feature type="sequence conflict" description="In Ref. 1; AAA21833." evidence="12" ref="1">
    <original>KA</original>
    <variation>NG</variation>
    <location>
        <begin position="1160"/>
        <end position="1161"/>
    </location>
</feature>
<name>EDC4_HUMAN</name>
<gene>
    <name type="primary">EDC4</name>
    <name type="synonym">HEDLS</name>
</gene>
<protein>
    <recommendedName>
        <fullName>Enhancer of mRNA-decapping protein 4</fullName>
    </recommendedName>
    <alternativeName>
        <fullName>Autoantigen Ge-1</fullName>
    </alternativeName>
    <alternativeName>
        <fullName>Autoantigen RCD-8</fullName>
    </alternativeName>
    <alternativeName>
        <fullName>Human enhancer of decapping large subunit</fullName>
        <shortName>Hedls</shortName>
    </alternativeName>
</protein>
<proteinExistence type="evidence at protein level"/>
<keyword id="KW-0007">Acetylation</keyword>
<keyword id="KW-0025">Alternative splicing</keyword>
<keyword id="KW-0175">Coiled coil</keyword>
<keyword id="KW-0963">Cytoplasm</keyword>
<keyword id="KW-0539">Nucleus</keyword>
<keyword id="KW-0597">Phosphoprotein</keyword>
<keyword id="KW-1267">Proteomics identification</keyword>
<keyword id="KW-1185">Reference proteome</keyword>
<keyword id="KW-0677">Repeat</keyword>
<keyword id="KW-0853">WD repeat</keyword>
<reference key="1">
    <citation type="journal article" date="1994" name="Clin. Immunol. Immunopathol.">
        <title>The immunoreactive region in a novel autoantigen contains a nuclear localization sequence.</title>
        <authorList>
            <person name="Bloch D.B."/>
            <person name="Rabkina D."/>
            <person name="Quertermous T."/>
            <person name="Bloch K.D."/>
        </authorList>
    </citation>
    <scope>NUCLEOTIDE SEQUENCE [MRNA] (ISOFORM 1)</scope>
    <scope>SUBCELLULAR LOCATION</scope>
</reference>
<reference key="2">
    <citation type="journal article" date="2004" name="Nat. Genet.">
        <title>Complete sequencing and characterization of 21,243 full-length human cDNAs.</title>
        <authorList>
            <person name="Ota T."/>
            <person name="Suzuki Y."/>
            <person name="Nishikawa T."/>
            <person name="Otsuki T."/>
            <person name="Sugiyama T."/>
            <person name="Irie R."/>
            <person name="Wakamatsu A."/>
            <person name="Hayashi K."/>
            <person name="Sato H."/>
            <person name="Nagai K."/>
            <person name="Kimura K."/>
            <person name="Makita H."/>
            <person name="Sekine M."/>
            <person name="Obayashi M."/>
            <person name="Nishi T."/>
            <person name="Shibahara T."/>
            <person name="Tanaka T."/>
            <person name="Ishii S."/>
            <person name="Yamamoto J."/>
            <person name="Saito K."/>
            <person name="Kawai Y."/>
            <person name="Isono Y."/>
            <person name="Nakamura Y."/>
            <person name="Nagahari K."/>
            <person name="Murakami K."/>
            <person name="Yasuda T."/>
            <person name="Iwayanagi T."/>
            <person name="Wagatsuma M."/>
            <person name="Shiratori A."/>
            <person name="Sudo H."/>
            <person name="Hosoiri T."/>
            <person name="Kaku Y."/>
            <person name="Kodaira H."/>
            <person name="Kondo H."/>
            <person name="Sugawara M."/>
            <person name="Takahashi M."/>
            <person name="Kanda K."/>
            <person name="Yokoi T."/>
            <person name="Furuya T."/>
            <person name="Kikkawa E."/>
            <person name="Omura Y."/>
            <person name="Abe K."/>
            <person name="Kamihara K."/>
            <person name="Katsuta N."/>
            <person name="Sato K."/>
            <person name="Tanikawa M."/>
            <person name="Yamazaki M."/>
            <person name="Ninomiya K."/>
            <person name="Ishibashi T."/>
            <person name="Yamashita H."/>
            <person name="Murakawa K."/>
            <person name="Fujimori K."/>
            <person name="Tanai H."/>
            <person name="Kimata M."/>
            <person name="Watanabe M."/>
            <person name="Hiraoka S."/>
            <person name="Chiba Y."/>
            <person name="Ishida S."/>
            <person name="Ono Y."/>
            <person name="Takiguchi S."/>
            <person name="Watanabe S."/>
            <person name="Yosida M."/>
            <person name="Hotuta T."/>
            <person name="Kusano J."/>
            <person name="Kanehori K."/>
            <person name="Takahashi-Fujii A."/>
            <person name="Hara H."/>
            <person name="Tanase T.-O."/>
            <person name="Nomura Y."/>
            <person name="Togiya S."/>
            <person name="Komai F."/>
            <person name="Hara R."/>
            <person name="Takeuchi K."/>
            <person name="Arita M."/>
            <person name="Imose N."/>
            <person name="Musashino K."/>
            <person name="Yuuki H."/>
            <person name="Oshima A."/>
            <person name="Sasaki N."/>
            <person name="Aotsuka S."/>
            <person name="Yoshikawa Y."/>
            <person name="Matsunawa H."/>
            <person name="Ichihara T."/>
            <person name="Shiohata N."/>
            <person name="Sano S."/>
            <person name="Moriya S."/>
            <person name="Momiyama H."/>
            <person name="Satoh N."/>
            <person name="Takami S."/>
            <person name="Terashima Y."/>
            <person name="Suzuki O."/>
            <person name="Nakagawa S."/>
            <person name="Senoh A."/>
            <person name="Mizoguchi H."/>
            <person name="Goto Y."/>
            <person name="Shimizu F."/>
            <person name="Wakebe H."/>
            <person name="Hishigaki H."/>
            <person name="Watanabe T."/>
            <person name="Sugiyama A."/>
            <person name="Takemoto M."/>
            <person name="Kawakami B."/>
            <person name="Yamazaki M."/>
            <person name="Watanabe K."/>
            <person name="Kumagai A."/>
            <person name="Itakura S."/>
            <person name="Fukuzumi Y."/>
            <person name="Fujimori Y."/>
            <person name="Komiyama M."/>
            <person name="Tashiro H."/>
            <person name="Tanigami A."/>
            <person name="Fujiwara T."/>
            <person name="Ono T."/>
            <person name="Yamada K."/>
            <person name="Fujii Y."/>
            <person name="Ozaki K."/>
            <person name="Hirao M."/>
            <person name="Ohmori Y."/>
            <person name="Kawabata A."/>
            <person name="Hikiji T."/>
            <person name="Kobatake N."/>
            <person name="Inagaki H."/>
            <person name="Ikema Y."/>
            <person name="Okamoto S."/>
            <person name="Okitani R."/>
            <person name="Kawakami T."/>
            <person name="Noguchi S."/>
            <person name="Itoh T."/>
            <person name="Shigeta K."/>
            <person name="Senba T."/>
            <person name="Matsumura K."/>
            <person name="Nakajima Y."/>
            <person name="Mizuno T."/>
            <person name="Morinaga M."/>
            <person name="Sasaki M."/>
            <person name="Togashi T."/>
            <person name="Oyama M."/>
            <person name="Hata H."/>
            <person name="Watanabe M."/>
            <person name="Komatsu T."/>
            <person name="Mizushima-Sugano J."/>
            <person name="Satoh T."/>
            <person name="Shirai Y."/>
            <person name="Takahashi Y."/>
            <person name="Nakagawa K."/>
            <person name="Okumura K."/>
            <person name="Nagase T."/>
            <person name="Nomura N."/>
            <person name="Kikuchi H."/>
            <person name="Masuho Y."/>
            <person name="Yamashita R."/>
            <person name="Nakai K."/>
            <person name="Yada T."/>
            <person name="Nakamura Y."/>
            <person name="Ohara O."/>
            <person name="Isogai T."/>
            <person name="Sugano S."/>
        </authorList>
    </citation>
    <scope>NUCLEOTIDE SEQUENCE [LARGE SCALE MRNA] (ISOFORMS 1 AND 2)</scope>
    <source>
        <tissue>Trachea</tissue>
    </source>
</reference>
<reference key="3">
    <citation type="journal article" date="2004" name="Nature">
        <title>The sequence and analysis of duplication-rich human chromosome 16.</title>
        <authorList>
            <person name="Martin J."/>
            <person name="Han C."/>
            <person name="Gordon L.A."/>
            <person name="Terry A."/>
            <person name="Prabhakar S."/>
            <person name="She X."/>
            <person name="Xie G."/>
            <person name="Hellsten U."/>
            <person name="Chan Y.M."/>
            <person name="Altherr M."/>
            <person name="Couronne O."/>
            <person name="Aerts A."/>
            <person name="Bajorek E."/>
            <person name="Black S."/>
            <person name="Blumer H."/>
            <person name="Branscomb E."/>
            <person name="Brown N.C."/>
            <person name="Bruno W.J."/>
            <person name="Buckingham J.M."/>
            <person name="Callen D.F."/>
            <person name="Campbell C.S."/>
            <person name="Campbell M.L."/>
            <person name="Campbell E.W."/>
            <person name="Caoile C."/>
            <person name="Challacombe J.F."/>
            <person name="Chasteen L.A."/>
            <person name="Chertkov O."/>
            <person name="Chi H.C."/>
            <person name="Christensen M."/>
            <person name="Clark L.M."/>
            <person name="Cohn J.D."/>
            <person name="Denys M."/>
            <person name="Detter J.C."/>
            <person name="Dickson M."/>
            <person name="Dimitrijevic-Bussod M."/>
            <person name="Escobar J."/>
            <person name="Fawcett J.J."/>
            <person name="Flowers D."/>
            <person name="Fotopulos D."/>
            <person name="Glavina T."/>
            <person name="Gomez M."/>
            <person name="Gonzales E."/>
            <person name="Goodstein D."/>
            <person name="Goodwin L.A."/>
            <person name="Grady D.L."/>
            <person name="Grigoriev I."/>
            <person name="Groza M."/>
            <person name="Hammon N."/>
            <person name="Hawkins T."/>
            <person name="Haydu L."/>
            <person name="Hildebrand C.E."/>
            <person name="Huang W."/>
            <person name="Israni S."/>
            <person name="Jett J."/>
            <person name="Jewett P.B."/>
            <person name="Kadner K."/>
            <person name="Kimball H."/>
            <person name="Kobayashi A."/>
            <person name="Krawczyk M.-C."/>
            <person name="Leyba T."/>
            <person name="Longmire J.L."/>
            <person name="Lopez F."/>
            <person name="Lou Y."/>
            <person name="Lowry S."/>
            <person name="Ludeman T."/>
            <person name="Manohar C.F."/>
            <person name="Mark G.A."/>
            <person name="McMurray K.L."/>
            <person name="Meincke L.J."/>
            <person name="Morgan J."/>
            <person name="Moyzis R.K."/>
            <person name="Mundt M.O."/>
            <person name="Munk A.C."/>
            <person name="Nandkeshwar R.D."/>
            <person name="Pitluck S."/>
            <person name="Pollard M."/>
            <person name="Predki P."/>
            <person name="Parson-Quintana B."/>
            <person name="Ramirez L."/>
            <person name="Rash S."/>
            <person name="Retterer J."/>
            <person name="Ricke D.O."/>
            <person name="Robinson D.L."/>
            <person name="Rodriguez A."/>
            <person name="Salamov A."/>
            <person name="Saunders E.H."/>
            <person name="Scott D."/>
            <person name="Shough T."/>
            <person name="Stallings R.L."/>
            <person name="Stalvey M."/>
            <person name="Sutherland R.D."/>
            <person name="Tapia R."/>
            <person name="Tesmer J.G."/>
            <person name="Thayer N."/>
            <person name="Thompson L.S."/>
            <person name="Tice H."/>
            <person name="Torney D.C."/>
            <person name="Tran-Gyamfi M."/>
            <person name="Tsai M."/>
            <person name="Ulanovsky L.E."/>
            <person name="Ustaszewska A."/>
            <person name="Vo N."/>
            <person name="White P.S."/>
            <person name="Williams A.L."/>
            <person name="Wills P.L."/>
            <person name="Wu J.-R."/>
            <person name="Wu K."/>
            <person name="Yang J."/>
            <person name="DeJong P."/>
            <person name="Bruce D."/>
            <person name="Doggett N.A."/>
            <person name="Deaven L."/>
            <person name="Schmutz J."/>
            <person name="Grimwood J."/>
            <person name="Richardson P."/>
            <person name="Rokhsar D.S."/>
            <person name="Eichler E.E."/>
            <person name="Gilna P."/>
            <person name="Lucas S.M."/>
            <person name="Myers R.M."/>
            <person name="Rubin E.M."/>
            <person name="Pennacchio L.A."/>
        </authorList>
    </citation>
    <scope>NUCLEOTIDE SEQUENCE [LARGE SCALE GENOMIC DNA]</scope>
</reference>
<reference key="4">
    <citation type="submission" date="2005-07" db="EMBL/GenBank/DDBJ databases">
        <authorList>
            <person name="Mural R.J."/>
            <person name="Istrail S."/>
            <person name="Sutton G.G."/>
            <person name="Florea L."/>
            <person name="Halpern A.L."/>
            <person name="Mobarry C.M."/>
            <person name="Lippert R."/>
            <person name="Walenz B."/>
            <person name="Shatkay H."/>
            <person name="Dew I."/>
            <person name="Miller J.R."/>
            <person name="Flanigan M.J."/>
            <person name="Edwards N.J."/>
            <person name="Bolanos R."/>
            <person name="Fasulo D."/>
            <person name="Halldorsson B.V."/>
            <person name="Hannenhalli S."/>
            <person name="Turner R."/>
            <person name="Yooseph S."/>
            <person name="Lu F."/>
            <person name="Nusskern D.R."/>
            <person name="Shue B.C."/>
            <person name="Zheng X.H."/>
            <person name="Zhong F."/>
            <person name="Delcher A.L."/>
            <person name="Huson D.H."/>
            <person name="Kravitz S.A."/>
            <person name="Mouchard L."/>
            <person name="Reinert K."/>
            <person name="Remington K.A."/>
            <person name="Clark A.G."/>
            <person name="Waterman M.S."/>
            <person name="Eichler E.E."/>
            <person name="Adams M.D."/>
            <person name="Hunkapiller M.W."/>
            <person name="Myers E.W."/>
            <person name="Venter J.C."/>
        </authorList>
    </citation>
    <scope>NUCLEOTIDE SEQUENCE [LARGE SCALE GENOMIC DNA]</scope>
</reference>
<reference key="5">
    <citation type="journal article" date="2004" name="Genome Res.">
        <title>The status, quality, and expansion of the NIH full-length cDNA project: the Mammalian Gene Collection (MGC).</title>
        <authorList>
            <consortium name="The MGC Project Team"/>
        </authorList>
    </citation>
    <scope>NUCLEOTIDE SEQUENCE [LARGE SCALE MRNA] (ISOFORM 1)</scope>
    <source>
        <tissue>Duodenum</tissue>
        <tissue>Skin</tissue>
        <tissue>Testis</tissue>
    </source>
</reference>
<reference key="6">
    <citation type="journal article" date="1997" name="Clin. Exp. Immunol.">
        <title>Cytoplasmic detection of a novel protein containing a nuclear localization sequence by human autoantibodies.</title>
        <authorList>
            <person name="Garcia-Lozano J.R."/>
            <person name="Gonzalez-Escribano M.F."/>
            <person name="Wichmann I."/>
            <person name="Nunez-Roldan A."/>
        </authorList>
    </citation>
    <scope>NUCLEOTIDE SEQUENCE [MRNA] OF 421-1401 (ISOFORMS 1/2)</scope>
    <scope>SUBCELLULAR LOCATION</scope>
</reference>
<reference key="7">
    <citation type="journal article" date="2003" name="Nature">
        <title>Proteomic characterization of the human centrosome by protein correlation profiling.</title>
        <authorList>
            <person name="Andersen J.S."/>
            <person name="Wilkinson C.J."/>
            <person name="Mayor T."/>
            <person name="Mortensen P."/>
            <person name="Nigg E.A."/>
            <person name="Mann M."/>
        </authorList>
    </citation>
    <scope>IDENTIFICATION BY MASS SPECTROMETRY</scope>
    <source>
        <tissue>Lymphoblast</tissue>
    </source>
</reference>
<reference key="8">
    <citation type="journal article" date="2005" name="Mol. Cell">
        <title>Multiple processing body factors and the ARE binding protein TTP activate mRNA decapping.</title>
        <authorList>
            <person name="Fenger-Groen M."/>
            <person name="Fillman C."/>
            <person name="Norrild B."/>
            <person name="Lykke-Andersen J."/>
        </authorList>
    </citation>
    <scope>INTERACTION WITH DCP1A; DCP1B; DCP2; DDX6 AND EDC3</scope>
    <scope>SUBCELLULAR LOCATION</scope>
    <scope>FUNCTION</scope>
    <scope>IDENTIFICATION BY MASS SPECTROMETRY</scope>
</reference>
<reference key="9">
    <citation type="journal article" date="2006" name="Cell">
        <title>Global, in vivo, and site-specific phosphorylation dynamics in signaling networks.</title>
        <authorList>
            <person name="Olsen J.V."/>
            <person name="Blagoev B."/>
            <person name="Gnad F."/>
            <person name="Macek B."/>
            <person name="Kumar C."/>
            <person name="Mortensen P."/>
            <person name="Mann M."/>
        </authorList>
    </citation>
    <scope>IDENTIFICATION BY MASS SPECTROMETRY [LARGE SCALE ANALYSIS]</scope>
    <source>
        <tissue>Cervix carcinoma</tissue>
    </source>
</reference>
<reference key="10">
    <citation type="journal article" date="2006" name="Nat. Biotechnol.">
        <title>A probability-based approach for high-throughput protein phosphorylation analysis and site localization.</title>
        <authorList>
            <person name="Beausoleil S.A."/>
            <person name="Villen J."/>
            <person name="Gerber S.A."/>
            <person name="Rush J."/>
            <person name="Gygi S.P."/>
        </authorList>
    </citation>
    <scope>PHOSPHORYLATION [LARGE SCALE ANALYSIS] AT SER-844</scope>
    <scope>IDENTIFICATION BY MASS SPECTROMETRY [LARGE SCALE ANALYSIS]</scope>
    <source>
        <tissue>Cervix carcinoma</tissue>
    </source>
</reference>
<reference key="11">
    <citation type="journal article" date="2007" name="J. Proteome Res.">
        <title>Improved titanium dioxide enrichment of phosphopeptides from HeLa cells and high confident phosphopeptide identification by cross-validation of MS/MS and MS/MS/MS spectra.</title>
        <authorList>
            <person name="Yu L.R."/>
            <person name="Zhu Z."/>
            <person name="Chan K.C."/>
            <person name="Issaq H.J."/>
            <person name="Dimitrov D.S."/>
            <person name="Veenstra T.D."/>
        </authorList>
    </citation>
    <scope>PHOSPHORYLATION [LARGE SCALE ANALYSIS] AT THR-693</scope>
    <scope>IDENTIFICATION BY MASS SPECTROMETRY [LARGE SCALE ANALYSIS]</scope>
    <source>
        <tissue>Cervix carcinoma</tissue>
    </source>
</reference>
<reference key="12">
    <citation type="journal article" date="2007" name="Science">
        <title>ATM and ATR substrate analysis reveals extensive protein networks responsive to DNA damage.</title>
        <authorList>
            <person name="Matsuoka S."/>
            <person name="Ballif B.A."/>
            <person name="Smogorzewska A."/>
            <person name="McDonald E.R. III"/>
            <person name="Hurov K.E."/>
            <person name="Luo J."/>
            <person name="Bakalarski C.E."/>
            <person name="Zhao Z."/>
            <person name="Solimini N."/>
            <person name="Lerenthal Y."/>
            <person name="Shiloh Y."/>
            <person name="Gygi S.P."/>
            <person name="Elledge S.J."/>
        </authorList>
    </citation>
    <scope>PHOSPHORYLATION [LARGE SCALE ANALYSIS] AT SER-741</scope>
    <scope>IDENTIFICATION BY MASS SPECTROMETRY [LARGE SCALE ANALYSIS]</scope>
    <source>
        <tissue>Embryonic kidney</tissue>
    </source>
</reference>
<reference key="13">
    <citation type="journal article" date="2008" name="J. Proteome Res.">
        <title>Combining protein-based IMAC, peptide-based IMAC, and MudPIT for efficient phosphoproteomic analysis.</title>
        <authorList>
            <person name="Cantin G.T."/>
            <person name="Yi W."/>
            <person name="Lu B."/>
            <person name="Park S.K."/>
            <person name="Xu T."/>
            <person name="Lee J.-D."/>
            <person name="Yates J.R. III"/>
        </authorList>
    </citation>
    <scope>PHOSPHORYLATION [LARGE SCALE ANALYSIS] AT SER-729</scope>
    <scope>IDENTIFICATION BY MASS SPECTROMETRY [LARGE SCALE ANALYSIS]</scope>
    <source>
        <tissue>Cervix carcinoma</tissue>
    </source>
</reference>
<reference key="14">
    <citation type="journal article" date="2008" name="J. Proteome Res.">
        <title>Phosphorylation analysis of primary human T lymphocytes using sequential IMAC and titanium oxide enrichment.</title>
        <authorList>
            <person name="Carrascal M."/>
            <person name="Ovelleiro D."/>
            <person name="Casas V."/>
            <person name="Gay M."/>
            <person name="Abian J."/>
        </authorList>
    </citation>
    <scope>IDENTIFICATION BY MASS SPECTROMETRY [LARGE SCALE ANALYSIS]</scope>
    <source>
        <tissue>T-cell</tissue>
    </source>
</reference>
<reference key="15">
    <citation type="journal article" date="2008" name="Mol. Cell">
        <title>Kinase-selective enrichment enables quantitative phosphoproteomics of the kinome across the cell cycle.</title>
        <authorList>
            <person name="Daub H."/>
            <person name="Olsen J.V."/>
            <person name="Bairlein M."/>
            <person name="Gnad F."/>
            <person name="Oppermann F.S."/>
            <person name="Korner R."/>
            <person name="Greff Z."/>
            <person name="Keri G."/>
            <person name="Stemmann O."/>
            <person name="Mann M."/>
        </authorList>
    </citation>
    <scope>PHOSPHORYLATION [LARGE SCALE ANALYSIS] AT SER-729 AND SER-871</scope>
    <scope>IDENTIFICATION BY MASS SPECTROMETRY [LARGE SCALE ANALYSIS]</scope>
    <source>
        <tissue>Cervix carcinoma</tissue>
    </source>
</reference>
<reference key="16">
    <citation type="journal article" date="2008" name="Proc. Natl. Acad. Sci. U.S.A.">
        <title>A quantitative atlas of mitotic phosphorylation.</title>
        <authorList>
            <person name="Dephoure N."/>
            <person name="Zhou C."/>
            <person name="Villen J."/>
            <person name="Beausoleil S.A."/>
            <person name="Bakalarski C.E."/>
            <person name="Elledge S.J."/>
            <person name="Gygi S.P."/>
        </authorList>
    </citation>
    <scope>PHOSPHORYLATION [LARGE SCALE ANALYSIS] AT SER-723; SER-725; THR-821; SER-844; SER-871 AND SER-879</scope>
    <scope>IDENTIFICATION BY MASS SPECTROMETRY [LARGE SCALE ANALYSIS]</scope>
    <source>
        <tissue>Cervix carcinoma</tissue>
    </source>
</reference>
<reference key="17">
    <citation type="journal article" date="2009" name="Anal. Chem.">
        <title>Lys-N and trypsin cover complementary parts of the phosphoproteome in a refined SCX-based approach.</title>
        <authorList>
            <person name="Gauci S."/>
            <person name="Helbig A.O."/>
            <person name="Slijper M."/>
            <person name="Krijgsveld J."/>
            <person name="Heck A.J."/>
            <person name="Mohammed S."/>
        </authorList>
    </citation>
    <scope>ACETYLATION [LARGE SCALE ANALYSIS] AT ALA-2</scope>
    <scope>CLEAVAGE OF INITIATOR METHIONINE [LARGE SCALE ANALYSIS]</scope>
    <scope>IDENTIFICATION BY MASS SPECTROMETRY [LARGE SCALE ANALYSIS]</scope>
</reference>
<reference key="18">
    <citation type="journal article" date="2009" name="Mol. Cell. Proteomics">
        <title>Large-scale proteomics analysis of the human kinome.</title>
        <authorList>
            <person name="Oppermann F.S."/>
            <person name="Gnad F."/>
            <person name="Olsen J.V."/>
            <person name="Hornberger R."/>
            <person name="Greff Z."/>
            <person name="Keri G."/>
            <person name="Mann M."/>
            <person name="Daub H."/>
        </authorList>
    </citation>
    <scope>PHOSPHORYLATION [LARGE SCALE ANALYSIS] AT SER-729 AND SER-879</scope>
    <scope>IDENTIFICATION BY MASS SPECTROMETRY [LARGE SCALE ANALYSIS]</scope>
</reference>
<reference key="19">
    <citation type="journal article" date="2009" name="Sci. Signal.">
        <title>Quantitative phosphoproteomic analysis of T cell receptor signaling reveals system-wide modulation of protein-protein interactions.</title>
        <authorList>
            <person name="Mayya V."/>
            <person name="Lundgren D.H."/>
            <person name="Hwang S.-I."/>
            <person name="Rezaul K."/>
            <person name="Wu L."/>
            <person name="Eng J.K."/>
            <person name="Rodionov V."/>
            <person name="Han D.K."/>
        </authorList>
    </citation>
    <scope>PHOSPHORYLATION [LARGE SCALE ANALYSIS] AT THR-693; SER-729; SER-741; SER-875; SER-879 AND SER-892</scope>
    <scope>IDENTIFICATION BY MASS SPECTROMETRY [LARGE SCALE ANALYSIS]</scope>
    <source>
        <tissue>Leukemic T-cell</tissue>
    </source>
</reference>
<reference key="20">
    <citation type="journal article" date="2009" name="Science">
        <title>Lysine acetylation targets protein complexes and co-regulates major cellular functions.</title>
        <authorList>
            <person name="Choudhary C."/>
            <person name="Kumar C."/>
            <person name="Gnad F."/>
            <person name="Nielsen M.L."/>
            <person name="Rehman M."/>
            <person name="Walther T.C."/>
            <person name="Olsen J.V."/>
            <person name="Mann M."/>
        </authorList>
    </citation>
    <scope>ACETYLATION [LARGE SCALE ANALYSIS] AT LYS-125</scope>
    <scope>IDENTIFICATION BY MASS SPECTROMETRY [LARGE SCALE ANALYSIS]</scope>
</reference>
<reference key="21">
    <citation type="journal article" date="2010" name="Sci. Signal.">
        <title>Quantitative phosphoproteomics reveals widespread full phosphorylation site occupancy during mitosis.</title>
        <authorList>
            <person name="Olsen J.V."/>
            <person name="Vermeulen M."/>
            <person name="Santamaria A."/>
            <person name="Kumar C."/>
            <person name="Miller M.L."/>
            <person name="Jensen L.J."/>
            <person name="Gnad F."/>
            <person name="Cox J."/>
            <person name="Jensen T.S."/>
            <person name="Nigg E.A."/>
            <person name="Brunak S."/>
            <person name="Mann M."/>
        </authorList>
    </citation>
    <scope>IDENTIFICATION BY MASS SPECTROMETRY [LARGE SCALE ANALYSIS]</scope>
    <source>
        <tissue>Cervix carcinoma</tissue>
    </source>
</reference>
<reference key="22">
    <citation type="journal article" date="2011" name="BMC Syst. Biol.">
        <title>Initial characterization of the human central proteome.</title>
        <authorList>
            <person name="Burkard T.R."/>
            <person name="Planyavsky M."/>
            <person name="Kaupe I."/>
            <person name="Breitwieser F.P."/>
            <person name="Buerckstuemmer T."/>
            <person name="Bennett K.L."/>
            <person name="Superti-Furga G."/>
            <person name="Colinge J."/>
        </authorList>
    </citation>
    <scope>IDENTIFICATION BY MASS SPECTROMETRY [LARGE SCALE ANALYSIS]</scope>
</reference>
<reference key="23">
    <citation type="journal article" date="2011" name="Sci. Signal.">
        <title>System-wide temporal characterization of the proteome and phosphoproteome of human embryonic stem cell differentiation.</title>
        <authorList>
            <person name="Rigbolt K.T."/>
            <person name="Prokhorova T.A."/>
            <person name="Akimov V."/>
            <person name="Henningsen J."/>
            <person name="Johansen P.T."/>
            <person name="Kratchmarova I."/>
            <person name="Kassem M."/>
            <person name="Mann M."/>
            <person name="Olsen J.V."/>
            <person name="Blagoev B."/>
        </authorList>
    </citation>
    <scope>IDENTIFICATION BY MASS SPECTROMETRY [LARGE SCALE ANALYSIS]</scope>
</reference>
<reference key="24">
    <citation type="journal article" date="2013" name="J. Proteome Res.">
        <title>Toward a comprehensive characterization of a human cancer cell phosphoproteome.</title>
        <authorList>
            <person name="Zhou H."/>
            <person name="Di Palma S."/>
            <person name="Preisinger C."/>
            <person name="Peng M."/>
            <person name="Polat A.N."/>
            <person name="Heck A.J."/>
            <person name="Mohammed S."/>
        </authorList>
    </citation>
    <scope>PHOSPHORYLATION [LARGE SCALE ANALYSIS] AT SER-3; SER-6; SER-583; SER-585; THR-693; SER-729; SER-844; SER-967 AND SER-1380</scope>
    <scope>IDENTIFICATION BY MASS SPECTROMETRY [LARGE SCALE ANALYSIS]</scope>
    <source>
        <tissue>Cervix carcinoma</tissue>
        <tissue>Erythroleukemia</tissue>
    </source>
</reference>
<reference key="25">
    <citation type="journal article" date="2014" name="J. Proteomics">
        <title>An enzyme assisted RP-RPLC approach for in-depth analysis of human liver phosphoproteome.</title>
        <authorList>
            <person name="Bian Y."/>
            <person name="Song C."/>
            <person name="Cheng K."/>
            <person name="Dong M."/>
            <person name="Wang F."/>
            <person name="Huang J."/>
            <person name="Sun D."/>
            <person name="Wang L."/>
            <person name="Ye M."/>
            <person name="Zou H."/>
        </authorList>
    </citation>
    <scope>PHOSPHORYLATION [LARGE SCALE ANALYSIS] AT SER-560; SER-565; SER-708; SER-725; THR-727; SER-729; SER-871 AND SER-879</scope>
    <scope>IDENTIFICATION BY MASS SPECTROMETRY [LARGE SCALE ANALYSIS]</scope>
    <source>
        <tissue>Liver</tissue>
    </source>
</reference>
<reference key="26">
    <citation type="journal article" date="2015" name="Proteomics">
        <title>N-terminome analysis of the human mitochondrial proteome.</title>
        <authorList>
            <person name="Vaca Jacome A.S."/>
            <person name="Rabilloud T."/>
            <person name="Schaeffer-Reiss C."/>
            <person name="Rompais M."/>
            <person name="Ayoub D."/>
            <person name="Lane L."/>
            <person name="Bairoch A."/>
            <person name="Van Dorsselaer A."/>
            <person name="Carapito C."/>
        </authorList>
    </citation>
    <scope>IDENTIFICATION BY MASS SPECTROMETRY [LARGE SCALE ANALYSIS]</scope>
</reference>
<reference key="27">
    <citation type="journal article" date="2017" name="Nat. Chem. Biol.">
        <title>A human microprotein that interacts with the mRNA decapping complex.</title>
        <authorList>
            <person name="D'Lima N.G."/>
            <person name="Ma J."/>
            <person name="Winkler L."/>
            <person name="Chu Q."/>
            <person name="Loh K.H."/>
            <person name="Corpuz E.O."/>
            <person name="Budnik B.A."/>
            <person name="Lykke-Andersen J."/>
            <person name="Saghatelian A."/>
            <person name="Slavoff S.A."/>
        </authorList>
    </citation>
    <scope>INTERACTION WITH NBDY</scope>
</reference>
<reference key="28">
    <citation type="journal article" date="2018" name="EMBO J.">
        <title>Molecular architecture of LSM14 interactions involved in the assembly of mRNA silencing complexes.</title>
        <authorList>
            <person name="Brandmann T."/>
            <person name="Fakim H."/>
            <person name="Padamsi Z."/>
            <person name="Youn J.Y."/>
            <person name="Gingras A.C."/>
            <person name="Fabian M.R."/>
            <person name="Jinek M."/>
        </authorList>
    </citation>
    <scope>INTERACTION WITH LSM14A</scope>
</reference>
<reference key="29">
    <citation type="journal article" date="2018" name="J. Virol.">
        <title>Rotavirus Induces Formation of Remodeled Stress Granules and P Bodies and Their Sequestration in Viroplasms To Promote Progeny Virus Production.</title>
        <authorList>
            <person name="Dhillon P."/>
            <person name="Rao C.D."/>
        </authorList>
    </citation>
    <scope>INTERACTION WITH ROTAVIRUS A NON-STRUCTURAL PROTEIN 2 (MICROBIAL INFECTION)</scope>
    <scope>INTERACTION WITH ROTAVIRUS A NON-STRUCTURAL PROTEIN 5 (MICROBIAL INFECTION)</scope>
</reference>
<reference key="30">
    <citation type="journal article" date="2019" name="Am. J. Hum. Genet.">
        <title>Rare de novo missense variants in RNA helicase DDX6 cause intellectual disability and dysmorphic features and lead to P-body defects and RNA dysregulation.</title>
        <authorList>
            <person name="Balak C."/>
            <person name="Benard M."/>
            <person name="Schaefer E."/>
            <person name="Iqbal S."/>
            <person name="Ramsey K."/>
            <person name="Ernoult-Lange M."/>
            <person name="Mattioli F."/>
            <person name="Llaci L."/>
            <person name="Geoffroy V."/>
            <person name="Courel M."/>
            <person name="Naymik M."/>
            <person name="Bachman K.K."/>
            <person name="Pfundt R."/>
            <person name="Rump P."/>
            <person name="Ter Beest J."/>
            <person name="Wentzensen I.M."/>
            <person name="Monaghan K.G."/>
            <person name="McWalter K."/>
            <person name="Richholt R."/>
            <person name="Le Bechec A."/>
            <person name="Jepsen W."/>
            <person name="De Both M."/>
            <person name="Belnap N."/>
            <person name="Boland A."/>
            <person name="Piras I.S."/>
            <person name="Deleuze J.F."/>
            <person name="Szelinger S."/>
            <person name="Dollfus H."/>
            <person name="Chelly J."/>
            <person name="Muller J."/>
            <person name="Campbell A."/>
            <person name="Lal D."/>
            <person name="Rangasamy S."/>
            <person name="Mandel J.L."/>
            <person name="Narayanan V."/>
            <person name="Huentelman M."/>
            <person name="Weil D."/>
            <person name="Piton A."/>
        </authorList>
    </citation>
    <scope>INTERACTION WITH DDX6</scope>
</reference>